<evidence type="ECO:0000250" key="1">
    <source>
        <dbReference type="UniProtKB" id="P80560"/>
    </source>
</evidence>
<evidence type="ECO:0000250" key="2">
    <source>
        <dbReference type="UniProtKB" id="Q16849"/>
    </source>
</evidence>
<evidence type="ECO:0000250" key="3">
    <source>
        <dbReference type="UniProtKB" id="Q60673"/>
    </source>
</evidence>
<evidence type="ECO:0000250" key="4">
    <source>
        <dbReference type="UniProtKB" id="Q63259"/>
    </source>
</evidence>
<evidence type="ECO:0000255" key="5"/>
<evidence type="ECO:0000255" key="6">
    <source>
        <dbReference type="PROSITE-ProRule" id="PRU00160"/>
    </source>
</evidence>
<evidence type="ECO:0000256" key="7">
    <source>
        <dbReference type="SAM" id="MobiDB-lite"/>
    </source>
</evidence>
<evidence type="ECO:0000269" key="8">
    <source>
    </source>
</evidence>
<evidence type="ECO:0000269" key="9">
    <source>
    </source>
</evidence>
<evidence type="ECO:0000269" key="10">
    <source ref="1"/>
</evidence>
<evidence type="ECO:0000303" key="11">
    <source>
    </source>
</evidence>
<evidence type="ECO:0000305" key="12"/>
<evidence type="ECO:0000305" key="13">
    <source>
    </source>
</evidence>
<keyword id="KW-1003">Cell membrane</keyword>
<keyword id="KW-0966">Cell projection</keyword>
<keyword id="KW-0968">Cytoplasmic vesicle</keyword>
<keyword id="KW-0903">Direct protein sequencing</keyword>
<keyword id="KW-1015">Disulfide bond</keyword>
<keyword id="KW-0967">Endosome</keyword>
<keyword id="KW-0325">Glycoprotein</keyword>
<keyword id="KW-1017">Isopeptide bond</keyword>
<keyword id="KW-0472">Membrane</keyword>
<keyword id="KW-0539">Nucleus</keyword>
<keyword id="KW-0597">Phosphoprotein</keyword>
<keyword id="KW-0675">Receptor</keyword>
<keyword id="KW-1185">Reference proteome</keyword>
<keyword id="KW-0732">Signal</keyword>
<keyword id="KW-0770">Synapse</keyword>
<keyword id="KW-0804">Transcription</keyword>
<keyword id="KW-0805">Transcription regulation</keyword>
<keyword id="KW-0812">Transmembrane</keyword>
<keyword id="KW-1133">Transmembrane helix</keyword>
<keyword id="KW-0832">Ubl conjugation</keyword>
<proteinExistence type="evidence at protein level"/>
<dbReference type="EMBL" id="AF075170">
    <property type="protein sequence ID" value="AAD41665.1"/>
    <property type="molecule type" value="mRNA"/>
</dbReference>
<dbReference type="EMBL" id="BC119839">
    <property type="protein sequence ID" value="AAI19840.1"/>
    <property type="molecule type" value="mRNA"/>
</dbReference>
<dbReference type="RefSeq" id="NP_001068599.1">
    <property type="nucleotide sequence ID" value="NM_001075131.1"/>
</dbReference>
<dbReference type="SMR" id="P56722"/>
<dbReference type="FunCoup" id="P56722">
    <property type="interactions" value="465"/>
</dbReference>
<dbReference type="STRING" id="9913.ENSBTAP00000018336"/>
<dbReference type="GlyCosmos" id="P56722">
    <property type="glycosylation" value="2 sites, No reported glycans"/>
</dbReference>
<dbReference type="GlyGen" id="P56722">
    <property type="glycosylation" value="2 sites"/>
</dbReference>
<dbReference type="PaxDb" id="9913-ENSBTAP00000018336"/>
<dbReference type="Ensembl" id="ENSBTAT00000018336.4">
    <property type="protein sequence ID" value="ENSBTAP00000018336.3"/>
    <property type="gene ID" value="ENSBTAG00000013798.5"/>
</dbReference>
<dbReference type="GeneID" id="286810"/>
<dbReference type="KEGG" id="bta:286810"/>
<dbReference type="CTD" id="5798"/>
<dbReference type="VEuPathDB" id="HostDB:ENSBTAG00000013798"/>
<dbReference type="VGNC" id="VGNC:33554">
    <property type="gene designation" value="PTPRN"/>
</dbReference>
<dbReference type="eggNOG" id="KOG0793">
    <property type="taxonomic scope" value="Eukaryota"/>
</dbReference>
<dbReference type="GeneTree" id="ENSGT00940000154095"/>
<dbReference type="HOGENOM" id="CLU_007905_2_0_1"/>
<dbReference type="InParanoid" id="P56722"/>
<dbReference type="OMA" id="AQTGFQI"/>
<dbReference type="OrthoDB" id="9880441at2759"/>
<dbReference type="TreeFam" id="TF351976"/>
<dbReference type="Proteomes" id="UP000009136">
    <property type="component" value="Chromosome 2"/>
</dbReference>
<dbReference type="Bgee" id="ENSBTAG00000013798">
    <property type="expression patterns" value="Expressed in adenohypophysis and 54 other cell types or tissues"/>
</dbReference>
<dbReference type="GO" id="GO:0043679">
    <property type="term" value="C:axon terminus"/>
    <property type="evidence" value="ECO:0000250"/>
    <property type="project" value="UniProtKB"/>
</dbReference>
<dbReference type="GO" id="GO:0005768">
    <property type="term" value="C:endosome"/>
    <property type="evidence" value="ECO:0000250"/>
    <property type="project" value="UniProtKB"/>
</dbReference>
<dbReference type="GO" id="GO:0005794">
    <property type="term" value="C:Golgi apparatus"/>
    <property type="evidence" value="ECO:0000250"/>
    <property type="project" value="UniProtKB"/>
</dbReference>
<dbReference type="GO" id="GO:0043025">
    <property type="term" value="C:neuronal cell body"/>
    <property type="evidence" value="ECO:0000250"/>
    <property type="project" value="UniProtKB"/>
</dbReference>
<dbReference type="GO" id="GO:0005634">
    <property type="term" value="C:nucleus"/>
    <property type="evidence" value="ECO:0007669"/>
    <property type="project" value="UniProtKB-SubCell"/>
</dbReference>
<dbReference type="GO" id="GO:0043204">
    <property type="term" value="C:perikaryon"/>
    <property type="evidence" value="ECO:0007669"/>
    <property type="project" value="UniProtKB-SubCell"/>
</dbReference>
<dbReference type="GO" id="GO:0005886">
    <property type="term" value="C:plasma membrane"/>
    <property type="evidence" value="ECO:0000250"/>
    <property type="project" value="UniProtKB"/>
</dbReference>
<dbReference type="GO" id="GO:0030141">
    <property type="term" value="C:secretory granule"/>
    <property type="evidence" value="ECO:0000250"/>
    <property type="project" value="UniProtKB"/>
</dbReference>
<dbReference type="GO" id="GO:0045202">
    <property type="term" value="C:synapse"/>
    <property type="evidence" value="ECO:0000250"/>
    <property type="project" value="UniProtKB"/>
</dbReference>
<dbReference type="GO" id="GO:0030658">
    <property type="term" value="C:transport vesicle membrane"/>
    <property type="evidence" value="ECO:0007669"/>
    <property type="project" value="UniProtKB-SubCell"/>
</dbReference>
<dbReference type="GO" id="GO:0030507">
    <property type="term" value="F:spectrin binding"/>
    <property type="evidence" value="ECO:0007669"/>
    <property type="project" value="Ensembl"/>
</dbReference>
<dbReference type="GO" id="GO:0044389">
    <property type="term" value="F:ubiquitin-like protein ligase binding"/>
    <property type="evidence" value="ECO:0007669"/>
    <property type="project" value="Ensembl"/>
</dbReference>
<dbReference type="GO" id="GO:1990502">
    <property type="term" value="P:dense core granule maturation"/>
    <property type="evidence" value="ECO:0007669"/>
    <property type="project" value="Ensembl"/>
</dbReference>
<dbReference type="GO" id="GO:0035773">
    <property type="term" value="P:insulin secretion involved in cellular response to glucose stimulus"/>
    <property type="evidence" value="ECO:0000250"/>
    <property type="project" value="UniProtKB"/>
</dbReference>
<dbReference type="GO" id="GO:0001553">
    <property type="term" value="P:luteinization"/>
    <property type="evidence" value="ECO:0000250"/>
    <property type="project" value="UniProtKB"/>
</dbReference>
<dbReference type="GO" id="GO:0045944">
    <property type="term" value="P:positive regulation of transcription by RNA polymerase II"/>
    <property type="evidence" value="ECO:0007669"/>
    <property type="project" value="Ensembl"/>
</dbReference>
<dbReference type="GO" id="GO:1904692">
    <property type="term" value="P:positive regulation of type B pancreatic cell proliferation"/>
    <property type="evidence" value="ECO:0007669"/>
    <property type="project" value="Ensembl"/>
</dbReference>
<dbReference type="GO" id="GO:0051046">
    <property type="term" value="P:regulation of secretion"/>
    <property type="evidence" value="ECO:0000318"/>
    <property type="project" value="GO_Central"/>
</dbReference>
<dbReference type="GO" id="GO:0000302">
    <property type="term" value="P:response to reactive oxygen species"/>
    <property type="evidence" value="ECO:0000250"/>
    <property type="project" value="UniProtKB"/>
</dbReference>
<dbReference type="CDD" id="cd14609">
    <property type="entry name" value="R-PTP-N"/>
    <property type="match status" value="1"/>
</dbReference>
<dbReference type="FunFam" id="3.30.70.2470:FF:000001">
    <property type="entry name" value="receptor-type tyrosine-protein phosphatase-like N isoform X1"/>
    <property type="match status" value="1"/>
</dbReference>
<dbReference type="FunFam" id="3.90.190.10:FF:000017">
    <property type="entry name" value="receptor-type tyrosine-protein phosphatase-like N isoform X2"/>
    <property type="match status" value="1"/>
</dbReference>
<dbReference type="Gene3D" id="3.90.190.10">
    <property type="entry name" value="Protein tyrosine phosphatase superfamily"/>
    <property type="match status" value="1"/>
</dbReference>
<dbReference type="Gene3D" id="3.30.70.2470">
    <property type="entry name" value="Protein-tyrosine phosphatase receptor IA-2 ectodomain"/>
    <property type="match status" value="1"/>
</dbReference>
<dbReference type="InterPro" id="IPR033522">
    <property type="entry name" value="IA-2/IA-2_beta"/>
</dbReference>
<dbReference type="InterPro" id="IPR029021">
    <property type="entry name" value="Prot-tyrosine_phosphatase-like"/>
</dbReference>
<dbReference type="InterPro" id="IPR000242">
    <property type="entry name" value="PTP_cat"/>
</dbReference>
<dbReference type="InterPro" id="IPR021613">
    <property type="entry name" value="Receptor_IA-2_dom"/>
</dbReference>
<dbReference type="InterPro" id="IPR038112">
    <property type="entry name" value="Receptor_IA-2_ectodomain_sf"/>
</dbReference>
<dbReference type="InterPro" id="IPR029403">
    <property type="entry name" value="RESP18_dom"/>
</dbReference>
<dbReference type="InterPro" id="IPR016130">
    <property type="entry name" value="Tyr_Pase_AS"/>
</dbReference>
<dbReference type="InterPro" id="IPR003595">
    <property type="entry name" value="Tyr_Pase_cat"/>
</dbReference>
<dbReference type="InterPro" id="IPR000387">
    <property type="entry name" value="Tyr_Pase_dom"/>
</dbReference>
<dbReference type="PANTHER" id="PTHR46106">
    <property type="entry name" value="IA-2 PROTEIN TYROSINE PHOSPHATASE, ISOFORM C"/>
    <property type="match status" value="1"/>
</dbReference>
<dbReference type="PANTHER" id="PTHR46106:SF1">
    <property type="entry name" value="RECEPTOR-TYPE TYROSINE-PROTEIN PHOSPHATASE-LIKE N"/>
    <property type="match status" value="1"/>
</dbReference>
<dbReference type="Pfam" id="PF11548">
    <property type="entry name" value="Receptor_IA-2"/>
    <property type="match status" value="1"/>
</dbReference>
<dbReference type="Pfam" id="PF14948">
    <property type="entry name" value="RESP18"/>
    <property type="match status" value="1"/>
</dbReference>
<dbReference type="Pfam" id="PF00102">
    <property type="entry name" value="Y_phosphatase"/>
    <property type="match status" value="1"/>
</dbReference>
<dbReference type="PRINTS" id="PR00700">
    <property type="entry name" value="PRTYPHPHTASE"/>
</dbReference>
<dbReference type="SMART" id="SM00194">
    <property type="entry name" value="PTPc"/>
    <property type="match status" value="1"/>
</dbReference>
<dbReference type="SMART" id="SM00404">
    <property type="entry name" value="PTPc_motif"/>
    <property type="match status" value="1"/>
</dbReference>
<dbReference type="SMART" id="SM01305">
    <property type="entry name" value="RESP18"/>
    <property type="match status" value="1"/>
</dbReference>
<dbReference type="SUPFAM" id="SSF52799">
    <property type="entry name" value="(Phosphotyrosine protein) phosphatases II"/>
    <property type="match status" value="1"/>
</dbReference>
<dbReference type="PROSITE" id="PS00383">
    <property type="entry name" value="TYR_PHOSPHATASE_1"/>
    <property type="match status" value="1"/>
</dbReference>
<dbReference type="PROSITE" id="PS50056">
    <property type="entry name" value="TYR_PHOSPHATASE_2"/>
    <property type="match status" value="1"/>
</dbReference>
<dbReference type="PROSITE" id="PS50055">
    <property type="entry name" value="TYR_PHOSPHATASE_PTP"/>
    <property type="match status" value="1"/>
</dbReference>
<sequence>MRLPGRPGGPGGSGGLRVLLCLLLLGSRPGGCNAISAHGCLFDRRLCSHLEVCIQDGLFGQCQVGVGQARPLLQVTSPVLQRLQGVLRQLMSQGLSWHDDLTQYVISQEMERIPRLRPPEPHPRDRSGLVPRRPGPAGELLLQGIPTGSAPALQHRLPRPSVGGGRAGAGSPLSPLQAELLPPLLEHLLLPPQPPHPALSYEPALLQPYLFHQFGSRDGSRGSESSPGMVSVDPLPKAEAPAFLSRAGSKGMFGAHPGHSYGDPPGPPPAQLFQESELFYLAQESQVPSRTRAPRLPEPGGSSRAGDSSEGYEEEGLEGREEKPPAPAEQPDVTLQRVAAVLAGYGVELHQLTPEQLSTLSTLLQLLPKGSRQNPGGAVNVGADIKKTMEEQVQGEDPAEPPPPMPSLPGSPTGSSTSNKAQKELSTGASEPPKAAGPPATPVLVEKKSPLGQNQPTMAGQPSTRPSAEEYGYIVTDQKPLSLAAGVRLLEILAEHVHMSSGSFINISVVGPALTFRIRHNEQNLSLADVTQQAGLVKSELEAQTGLQILQTGVGQREEAAAILPRPAHSTSPMRSVLLTLVALAGVAGLLVALAVALCVRQHARQRDKERLAALGPEGAHGDTTFEYQDLCRQHMATKSLFNRAEGPPEPSRVSSVSSQFSDAAQASPSSHSSTPSWCEEPAQANMDISTGHMILAYMEDHLRNRDRLAKEWQALCAYQAEPNTCATAQGEGNIKKNRHPDFLPYDHARIKLKVESSPSRSDYINASPIIEHDPRMPAYIATQGPLSHTIADFWQMVWESGCTVIVMLTPLVEDGVKQCDRYWPDEGSSLYHVYEVNLVSEHIWCEDFLVRSFYLKNVQTQETRTLTQFHFLSWPAEGTPASTRPLLDFRRKVNKCYRGRSCPIIVHCSDGAGRTGTYILIDMVLNRMAKGVKEIDIAATLEHVRDQRPGLVRSKDQFEFALTAVAEEVNAILKALPQ</sequence>
<protein>
    <recommendedName>
        <fullName>Receptor-type tyrosine-protein phosphatase-like N</fullName>
        <shortName>R-PTP-N</shortName>
    </recommendedName>
    <alternativeName>
        <fullName>Islet cell autoantigen 512</fullName>
        <shortName evidence="11">ICA512</shortName>
    </alternativeName>
    <component>
        <recommendedName>
            <fullName>ICA512-N-terminal fragment</fullName>
            <shortName>ICA512-NTF</shortName>
        </recommendedName>
    </component>
    <component>
        <recommendedName>
            <fullName>ICA512-transmembrane fragment</fullName>
            <shortName>ICA512-TMF</shortName>
        </recommendedName>
    </component>
    <component>
        <recommendedName>
            <fullName>ICA512-cleaved cytosolic fragment</fullName>
            <shortName>ICA512-CCF</shortName>
        </recommendedName>
    </component>
</protein>
<name>PTPRN_BOVIN</name>
<gene>
    <name type="primary">PTPRN</name>
</gene>
<reference key="1">
    <citation type="submission" date="1999-06" db="EMBL/GenBank/DDBJ databases">
        <title>Biochemical analysis of the IDDM autoantigen ICA512.</title>
        <authorList>
            <person name="Hermel J.-M."/>
            <person name="Dirkx R."/>
            <person name="Solimena M."/>
        </authorList>
    </citation>
    <scope>NUCLEOTIDE SEQUENCE [MRNA]</scope>
</reference>
<reference key="2">
    <citation type="submission" date="2006-08" db="EMBL/GenBank/DDBJ databases">
        <authorList>
            <consortium name="NIH - Mammalian Gene Collection (MGC) project"/>
        </authorList>
    </citation>
    <scope>NUCLEOTIDE SEQUENCE [LARGE SCALE MRNA]</scope>
    <source>
        <strain>Hereford</strain>
        <tissue>Hippocampus</tissue>
    </source>
</reference>
<reference key="3">
    <citation type="journal article" date="1996" name="EMBO J.">
        <title>ICA 512, an autoantigen of type I diabetes, is an intrinsic membrane protein of neurosecretory granules.</title>
        <authorList>
            <person name="Solimena M."/>
            <person name="Dirkx R. Jr."/>
            <person name="Hermel J.-M."/>
            <person name="Pleasic-Williams S."/>
            <person name="Shapiro J.A."/>
            <person name="Caron L."/>
            <person name="Rabin D.U."/>
        </authorList>
    </citation>
    <scope>PROTEIN SEQUENCE OF 449-463</scope>
    <scope>SUBCELLULAR LOCATION</scope>
    <scope>PROTEOLYTIC CLEAVAGE</scope>
    <scope>TISSUE SPECIFICITY</scope>
</reference>
<reference key="4">
    <citation type="journal article" date="1999" name="Eur. J. Neurosci.">
        <title>Post-translational modifications of ICA512, a receptor tyrosine phosphatase-like protein of secretory granules.</title>
        <authorList>
            <person name="Hermel J.-M."/>
            <person name="Dirkx R."/>
            <person name="Solimena M."/>
        </authorList>
    </citation>
    <scope>PROTEIN SEQUENCE OF N-TERMINUS</scope>
    <scope>CHARACTERIZATION</scope>
    <scope>TISSUE SPECIFICITY</scope>
    <scope>SUBCELLULAR LOCATION</scope>
</reference>
<feature type="signal peptide" evidence="8">
    <location>
        <begin position="1"/>
        <end position="34"/>
    </location>
</feature>
<feature type="chain" id="PRO_0000025450" description="Receptor-type tyrosine-protein phosphatase-like N">
    <location>
        <begin position="35"/>
        <end position="979"/>
    </location>
</feature>
<feature type="chain" id="PRO_0000438076" description="ICA512-N-terminal fragment" evidence="9">
    <location>
        <begin position="35"/>
        <end position="448"/>
    </location>
</feature>
<feature type="chain" id="PRO_0000438077" description="ICA512-transmembrane fragment" evidence="9">
    <location>
        <begin position="449"/>
        <end position="979"/>
    </location>
</feature>
<feature type="chain" id="PRO_0000438078" description="ICA512-cleaved cytosolic fragment" evidence="2">
    <location>
        <begin position="659"/>
        <end position="979"/>
    </location>
</feature>
<feature type="topological domain" description="Lumenal" evidence="5">
    <location>
        <begin position="35"/>
        <end position="575"/>
    </location>
</feature>
<feature type="transmembrane region" description="Helical" evidence="5">
    <location>
        <begin position="576"/>
        <end position="600"/>
    </location>
</feature>
<feature type="topological domain" description="Cytoplasmic" evidence="5">
    <location>
        <begin position="601"/>
        <end position="979"/>
    </location>
</feature>
<feature type="domain" description="Tyrosine-protein phosphatase" evidence="6">
    <location>
        <begin position="709"/>
        <end position="969"/>
    </location>
</feature>
<feature type="region of interest" description="RESP18 homology domain" evidence="2">
    <location>
        <begin position="35"/>
        <end position="131"/>
    </location>
</feature>
<feature type="region of interest" description="Disordered" evidence="7">
    <location>
        <begin position="113"/>
        <end position="171"/>
    </location>
</feature>
<feature type="region of interest" description="Disordered" evidence="7">
    <location>
        <begin position="248"/>
        <end position="272"/>
    </location>
</feature>
<feature type="region of interest" description="Disordered" evidence="7">
    <location>
        <begin position="285"/>
        <end position="332"/>
    </location>
</feature>
<feature type="region of interest" description="Disordered" evidence="7">
    <location>
        <begin position="391"/>
        <end position="466"/>
    </location>
</feature>
<feature type="region of interest" description="Sufficient for dimerization of proICA512" evidence="2">
    <location>
        <begin position="449"/>
        <end position="575"/>
    </location>
</feature>
<feature type="region of interest" description="Sufficient for dimerization of proICA512" evidence="1">
    <location>
        <begin position="601"/>
        <end position="732"/>
    </location>
</feature>
<feature type="region of interest" description="Disordered" evidence="7">
    <location>
        <begin position="643"/>
        <end position="680"/>
    </location>
</feature>
<feature type="compositionally biased region" description="Basic and acidic residues" evidence="7">
    <location>
        <begin position="113"/>
        <end position="127"/>
    </location>
</feature>
<feature type="compositionally biased region" description="Pro residues" evidence="7">
    <location>
        <begin position="400"/>
        <end position="409"/>
    </location>
</feature>
<feature type="compositionally biased region" description="Polar residues" evidence="7">
    <location>
        <begin position="451"/>
        <end position="466"/>
    </location>
</feature>
<feature type="compositionally biased region" description="Low complexity" evidence="7">
    <location>
        <begin position="652"/>
        <end position="677"/>
    </location>
</feature>
<feature type="site" description="Cleavage" evidence="8 9">
    <location>
        <begin position="448"/>
        <end position="449"/>
    </location>
</feature>
<feature type="modified residue" description="Phosphoserine" evidence="3">
    <location>
        <position position="308"/>
    </location>
</feature>
<feature type="modified residue" description="Phosphoserine" evidence="3">
    <location>
        <position position="309"/>
    </location>
</feature>
<feature type="glycosylation site" description="N-linked (GlcNAc...) asparagine" evidence="5">
    <location>
        <position position="506"/>
    </location>
</feature>
<feature type="glycosylation site" description="N-linked (GlcNAc...) asparagine" evidence="5">
    <location>
        <position position="524"/>
    </location>
</feature>
<feature type="disulfide bond" description="Interchain (with C-40 or C-47); in multimeric form" evidence="2">
    <location>
        <position position="40"/>
    </location>
</feature>
<feature type="disulfide bond" description="Interchain (with C-40 or C-47); in multimeric form" evidence="2">
    <location>
        <position position="47"/>
    </location>
</feature>
<feature type="disulfide bond" evidence="2">
    <location>
        <begin position="53"/>
        <end position="62"/>
    </location>
</feature>
<feature type="cross-link" description="Glycyl lysine isopeptide (Lys-Gly) (interchain with G-Cter in SUMO)" evidence="2">
    <location>
        <position position="754"/>
    </location>
</feature>
<comment type="function">
    <text evidence="2 3">Plays a role in vesicle-mediated secretory processes. Required for normal accumulation of secretory vesicles in hippocampus, pituitary and pancreatic islets. Required for the accumulation of normal levels of insulin-containing vesicles and preventing their degradation. Plays a role in insulin secretion in response to glucose stimuli. Required for normal accumulation of the neurotransmitters norepinephrine, dopamine and serotonin in the brain. In females, but not in males, required for normal accumulation and secretion of pituitary hormones, such as luteinizing hormone (LH) and follicle-stimulating hormone (FSH). Required to maintain normal levels of renin expression and renin release. Seems to lack intrinsic enzyme activity. May regulate catalytic active protein-tyrosine phosphatases such as PTPRA through dimerization.</text>
</comment>
<comment type="function">
    <molecule>ICA512-transmembrane fragment</molecule>
    <text evidence="2 3">ICA512-TMF regulates dynamics and exocytosis of insulin secretory granules (SGs); binding of ICA512-TMF to SNTB2/beta-2-syntrophin is proposed to restrain SGs mobility and exocytosis by tethering them to the actin cytoskeleton depending on UTRN; the function is inhibited by cytoplasmic ICA512-CFF dimerizing with ICA512-TMF and displacing SNTB2.</text>
</comment>
<comment type="function">
    <molecule>ICA512-cleaved cytosolic fragment</molecule>
    <text evidence="2">ICA512-CCF translocated to the nucleus promotes expression of insulin and other granule-related genes; the function implicates binding to and regulating activity of STAT5B probably by preventing its dephosphorylation and potentially by inducing its sumoylation by recruiting PIAS4. Enhances pancreatic beta-cell proliferation by converging with signaling by STAT5B and STAT3. ICA512-CCF located in the cytoplasm regulates dynamics and exocytosis of insulin secretory granules (SGs) by dimerizing with ICA512-TMF and displacing SNTB2 thus enhancing SGs mobility and exocytosis.</text>
</comment>
<comment type="subunit">
    <text evidence="2 3">Homodimer; shown for the unprocessed protein (proICA512) in the endoplasmic reticulum and resolved during protein maturation as ICA512-TMF seems to be predominantly monomeric in secretory granules; however, ICA512-CCF interacts with ICA512-TMF disrupting the ICA512-TMF:SNTB2 complex. The isolated lumenal RESP18 homology domain has been shown to form disulfide-linked homooligomers. Interacts (via cytoplasmic domain) with phosphorylated SNTB2; this protects PTPRN against cleavage by CAPN1 to produce ICA512-CCF. Dephosphorylation of SNTB2 upon insulin stimulation disrupts the interaction and results in PTPRN cleavage. Interacts with SNX19. ICA512-CCF interacts with PIAS4; in the nucleus. Interacts with STAT5B (phosphorylated); down-regulated by ICA512-CCF sumoylation; ICA512-CCF prevents STAT5B dephosphorylation; ICA512-CCF mediates interaction of STAT5B with PIAS4. Interacts (via RESP18 homology domain) with insulin and proinsulin. Interacts with PTPRN2, PTPRA and PTPRE.</text>
</comment>
<comment type="subcellular location">
    <subcellularLocation>
        <location evidence="9 10">Membrane</location>
        <topology evidence="13">Single-pass type I membrane protein</topology>
    </subcellularLocation>
    <subcellularLocation>
        <location evidence="9">Cytoplasmic vesicle</location>
        <location evidence="9">Secretory vesicle membrane</location>
        <topology evidence="12">Single-pass type I membrane protein</topology>
    </subcellularLocation>
    <subcellularLocation>
        <location evidence="4">Perikaryon</location>
    </subcellularLocation>
    <subcellularLocation>
        <location evidence="4">Cell projection</location>
        <location evidence="4">Axon</location>
    </subcellularLocation>
    <subcellularLocation>
        <location evidence="4">Synapse</location>
    </subcellularLocation>
    <subcellularLocation>
        <location evidence="4">Cell membrane</location>
        <topology evidence="4">Single-pass type I membrane protein</topology>
    </subcellularLocation>
    <subcellularLocation>
        <location evidence="9">Endosome</location>
    </subcellularLocation>
    <text evidence="4 9">Detected on neuronal secretory vesicles, but not on synaptic vesicles (PubMed:8641276). Colocalizes with insulin-containing secretory granules. Primarily detected on secretory vesicle membranes. Transiently found at the cell membrane, when secretory vesicles fuse with the cell membrane to release their cargo. Is then endocytosed and recycled to secretory vesicles via the Golgi apparatus membranes.</text>
</comment>
<comment type="subcellular location">
    <molecule>ICA512-transmembrane fragment</molecule>
    <subcellularLocation>
        <location evidence="9">Cytoplasmic vesicle</location>
        <location evidence="9">Secretory vesicle membrane</location>
    </subcellularLocation>
</comment>
<comment type="subcellular location">
    <molecule>ICA512-cleaved cytosolic fragment</molecule>
    <subcellularLocation>
        <location evidence="2">Nucleus</location>
    </subcellularLocation>
</comment>
<comment type="tissue specificity">
    <text evidence="8 9">Detected in pituitary (at protein level).</text>
</comment>
<comment type="PTM">
    <text evidence="8">N-glycosylated.</text>
</comment>
<comment type="PTM">
    <text evidence="2">O-glycosylated.</text>
</comment>
<comment type="PTM">
    <text evidence="2 4 8 9">Subject to proteolytic cleavage at multiple sites (PubMed:10457160). Subject to cleavage on a pair of basic residues. On exocytosis of secretory granules in pancreatic beta-cells ICA512-TMF is transiently inserted in the plasma-membrane and cleaved by mu-type calpain CPN1 to yield ICA512-CCF (By similarity).</text>
</comment>
<comment type="PTM">
    <text evidence="2">Sumoylated at two sites including Lys-754. Sumoylation decreases interaction with STAT5.</text>
</comment>
<comment type="similarity">
    <text evidence="12">Belongs to the protein-tyrosine phosphatase family. Receptor class 8 subfamily.</text>
</comment>
<comment type="caution">
    <text evidence="12">Does not possess catalytic activity due to replacement of highly conserved residues in tyrosine-protein phosphatase domain.</text>
</comment>
<organism>
    <name type="scientific">Bos taurus</name>
    <name type="common">Bovine</name>
    <dbReference type="NCBI Taxonomy" id="9913"/>
    <lineage>
        <taxon>Eukaryota</taxon>
        <taxon>Metazoa</taxon>
        <taxon>Chordata</taxon>
        <taxon>Craniata</taxon>
        <taxon>Vertebrata</taxon>
        <taxon>Euteleostomi</taxon>
        <taxon>Mammalia</taxon>
        <taxon>Eutheria</taxon>
        <taxon>Laurasiatheria</taxon>
        <taxon>Artiodactyla</taxon>
        <taxon>Ruminantia</taxon>
        <taxon>Pecora</taxon>
        <taxon>Bovidae</taxon>
        <taxon>Bovinae</taxon>
        <taxon>Bos</taxon>
    </lineage>
</organism>
<accession>P56722</accession>
<accession>Q0VD45</accession>